<accession>B2FI29</accession>
<reference key="1">
    <citation type="journal article" date="2008" name="Genome Biol.">
        <title>The complete genome, comparative and functional analysis of Stenotrophomonas maltophilia reveals an organism heavily shielded by drug resistance determinants.</title>
        <authorList>
            <person name="Crossman L.C."/>
            <person name="Gould V.C."/>
            <person name="Dow J.M."/>
            <person name="Vernikos G.S."/>
            <person name="Okazaki A."/>
            <person name="Sebaihia M."/>
            <person name="Saunders D."/>
            <person name="Arrowsmith C."/>
            <person name="Carver T."/>
            <person name="Peters N."/>
            <person name="Adlem E."/>
            <person name="Kerhornou A."/>
            <person name="Lord A."/>
            <person name="Murphy L."/>
            <person name="Seeger K."/>
            <person name="Squares R."/>
            <person name="Rutter S."/>
            <person name="Quail M.A."/>
            <person name="Rajandream M.A."/>
            <person name="Harris D."/>
            <person name="Churcher C."/>
            <person name="Bentley S.D."/>
            <person name="Parkhill J."/>
            <person name="Thomson N.R."/>
            <person name="Avison M.B."/>
        </authorList>
    </citation>
    <scope>NUCLEOTIDE SEQUENCE [LARGE SCALE GENOMIC DNA]</scope>
    <source>
        <strain>K279a</strain>
    </source>
</reference>
<reference key="2">
    <citation type="journal article" date="2011" name="Biochemistry">
        <title>Functional characterization of an NADPH dependent 2-alkyl-3-ketoalkanoic acid reductase involved in olefin biosynthesis in Stenotrophomonas maltophilia.</title>
        <authorList>
            <person name="Bonnett S.A."/>
            <person name="Papireddy K."/>
            <person name="Higgins S."/>
            <person name="del Cardayre S."/>
            <person name="Reynolds K.A."/>
        </authorList>
    </citation>
    <scope>FUNCTION</scope>
    <scope>CATALYTIC ACTIVITY</scope>
    <scope>BIOPHYSICOCHEMICAL PROPERTIES</scope>
    <scope>ACTIVE SITE</scope>
    <scope>SUBUNIT</scope>
    <scope>SUBSTRATE SPECIFICITY</scope>
</reference>
<feature type="chain" id="PRO_0000442980" description="2-alkyl-3-oxoalkanoate reductase">
    <location>
        <begin position="1"/>
        <end position="330"/>
    </location>
</feature>
<feature type="active site" description="Proton acceptor" evidence="4">
    <location>
        <position position="139"/>
    </location>
</feature>
<feature type="binding site" evidence="4">
    <location>
        <position position="143"/>
    </location>
    <ligand>
        <name>NADP(+)</name>
        <dbReference type="ChEBI" id="CHEBI:58349"/>
    </ligand>
</feature>
<protein>
    <recommendedName>
        <fullName evidence="2">2-alkyl-3-oxoalkanoate reductase</fullName>
        <ecNumber evidence="1">1.1.1.412</ecNumber>
    </recommendedName>
</protein>
<gene>
    <name evidence="2" type="primary">oleD</name>
    <name evidence="5" type="ordered locus">Smlt0209</name>
</gene>
<evidence type="ECO:0000269" key="1">
    <source>
    </source>
</evidence>
<evidence type="ECO:0000303" key="2">
    <source>
    </source>
</evidence>
<evidence type="ECO:0000305" key="3"/>
<evidence type="ECO:0000305" key="4">
    <source>
    </source>
</evidence>
<evidence type="ECO:0000312" key="5">
    <source>
        <dbReference type="EMBL" id="CAQ43817.1"/>
    </source>
</evidence>
<organism>
    <name type="scientific">Stenotrophomonas maltophilia (strain K279a)</name>
    <dbReference type="NCBI Taxonomy" id="522373"/>
    <lineage>
        <taxon>Bacteria</taxon>
        <taxon>Pseudomonadati</taxon>
        <taxon>Pseudomonadota</taxon>
        <taxon>Gammaproteobacteria</taxon>
        <taxon>Lysobacterales</taxon>
        <taxon>Lysobacteraceae</taxon>
        <taxon>Stenotrophomonas</taxon>
        <taxon>Stenotrophomonas maltophilia group</taxon>
    </lineage>
</organism>
<dbReference type="EC" id="1.1.1.412" evidence="1"/>
<dbReference type="EMBL" id="AM743169">
    <property type="protein sequence ID" value="CAQ43817.1"/>
    <property type="molecule type" value="Genomic_DNA"/>
</dbReference>
<dbReference type="RefSeq" id="WP_012478771.1">
    <property type="nucleotide sequence ID" value="NC_010943.1"/>
</dbReference>
<dbReference type="SMR" id="B2FI29"/>
<dbReference type="EnsemblBacteria" id="CAQ43817">
    <property type="protein sequence ID" value="CAQ43817"/>
    <property type="gene ID" value="Smlt0209"/>
</dbReference>
<dbReference type="KEGG" id="sml:Smlt0209"/>
<dbReference type="PATRIC" id="fig|522373.3.peg.200"/>
<dbReference type="eggNOG" id="COG0451">
    <property type="taxonomic scope" value="Bacteria"/>
</dbReference>
<dbReference type="HOGENOM" id="CLU_007383_6_1_6"/>
<dbReference type="BRENDA" id="1.1.1.412">
    <property type="organism ID" value="5134"/>
</dbReference>
<dbReference type="Proteomes" id="UP000008840">
    <property type="component" value="Chromosome"/>
</dbReference>
<dbReference type="GO" id="GO:0016616">
    <property type="term" value="F:oxidoreductase activity, acting on the CH-OH group of donors, NAD or NADP as acceptor"/>
    <property type="evidence" value="ECO:0007669"/>
    <property type="project" value="InterPro"/>
</dbReference>
<dbReference type="GO" id="GO:0006694">
    <property type="term" value="P:steroid biosynthetic process"/>
    <property type="evidence" value="ECO:0007669"/>
    <property type="project" value="InterPro"/>
</dbReference>
<dbReference type="Gene3D" id="3.40.50.720">
    <property type="entry name" value="NAD(P)-binding Rossmann-like Domain"/>
    <property type="match status" value="1"/>
</dbReference>
<dbReference type="InterPro" id="IPR053478">
    <property type="entry name" value="2-alkyl-3-oxoalkanoate_rdct"/>
</dbReference>
<dbReference type="InterPro" id="IPR002225">
    <property type="entry name" value="3Beta_OHSteriod_DH/Estase"/>
</dbReference>
<dbReference type="InterPro" id="IPR050177">
    <property type="entry name" value="Lipid_A_modif_metabolic_enz"/>
</dbReference>
<dbReference type="InterPro" id="IPR036291">
    <property type="entry name" value="NAD(P)-bd_dom_sf"/>
</dbReference>
<dbReference type="NCBIfam" id="NF042422">
    <property type="entry name" value="oxyalk_red_OleD"/>
    <property type="match status" value="1"/>
</dbReference>
<dbReference type="PANTHER" id="PTHR43245">
    <property type="entry name" value="BIFUNCTIONAL POLYMYXIN RESISTANCE PROTEIN ARNA"/>
    <property type="match status" value="1"/>
</dbReference>
<dbReference type="PANTHER" id="PTHR43245:SF51">
    <property type="entry name" value="SHORT CHAIN DEHYDROGENASE_REDUCTASE FAMILY 42E, MEMBER 2"/>
    <property type="match status" value="1"/>
</dbReference>
<dbReference type="Pfam" id="PF01073">
    <property type="entry name" value="3Beta_HSD"/>
    <property type="match status" value="1"/>
</dbReference>
<dbReference type="SUPFAM" id="SSF51735">
    <property type="entry name" value="NAD(P)-binding Rossmann-fold domains"/>
    <property type="match status" value="1"/>
</dbReference>
<comment type="function">
    <text evidence="1">Involved in olefin biosynthesis. Catalyzes the reversible stereospecific NADPH-dependent reduction of 2-alkyl-3-oxoalkanoic acids to 2-alkyl-3-hydroxyalkanoic acids. In the oxidative direction, syn-2-decyl-3-hydroxytetradecanoic acid is the preferred substrate. In the reductive direction, (2R/S)-2-hexyl-3-ketodecanoic acid is accepted as substrate.</text>
</comment>
<comment type="catalytic activity">
    <reaction evidence="1">
        <text>a (2R,3S)-2-alkyl-3-hydroxyalkanoate + NADP(+) = an (R)-2-alkyl-3-oxoalkanoate + NADPH + H(+)</text>
        <dbReference type="Rhea" id="RHEA:54796"/>
        <dbReference type="ChEBI" id="CHEBI:15378"/>
        <dbReference type="ChEBI" id="CHEBI:57783"/>
        <dbReference type="ChEBI" id="CHEBI:58349"/>
        <dbReference type="ChEBI" id="CHEBI:138340"/>
        <dbReference type="ChEBI" id="CHEBI:138341"/>
        <dbReference type="EC" id="1.1.1.412"/>
    </reaction>
    <physiologicalReaction direction="right-to-left" evidence="1">
        <dbReference type="Rhea" id="RHEA:54798"/>
    </physiologicalReaction>
</comment>
<comment type="biophysicochemical properties">
    <kinetics>
        <KM evidence="1">24 uM for NADP</KM>
        <KM evidence="1">26 uM for NADPH</KM>
        <KM evidence="1">31 uM for syn-2-decyl-3-hydroxytetradecanoic acid</KM>
        <KM evidence="1">161 uM for (2R/S)-2-hexyl-3-ketodecanoic acid</KM>
        <KM evidence="1">181 uM for (2R,3S)-2-hexyl-3-hydroxydecanoic acid</KM>
        <KM evidence="1">202 uM for syn-2-hexyl-3-hydroxydecanoic acid</KM>
        <KM evidence="1">214 uM for syn-2-octyl-3-hydroxydodecanoic acid</KM>
        <text evidence="1">kcat is 122 min(-1) for syn-2-octyl-3-hydroxydodecanoic acid as substrate. kcat is 85 min(-1) for syn-2-decyl-3-hydroxytetradecanoic acid as substrate. kcat is 79 min(-1) for (2R,3S)-2-hexyl-3-hydroxydecanoic acid as substrate. kcat is 72 min(-1) for syn-2-hexyl-3-hydroxydecanoic acid as substrate. kcat is 58 min(-1) for (2R/S)-2-hexyl-3-ketodecanoic acid as substrate.</text>
    </kinetics>
</comment>
<comment type="subunit">
    <text evidence="1">Homodimer.</text>
</comment>
<comment type="similarity">
    <text evidence="3">Belongs to the 3-beta-HSD family.</text>
</comment>
<name>OLED_STRMK</name>
<sequence length="330" mass="35480">MKILVTGGGGFLGQALCRGLVERGHQVLAFNRSHYPELQVMGVGQIRGDLADPQAVLHAVAGVDAVFHNGAKAGAWGSYDSYHQANVIGTDNVIAACRAHGIGRLVYTSTPSVTHRATHPVEGLGADEVPYGEDFQAPYAATKAIAEQRVLAANDASLATVALRPRLIWGPGDQQLVPRLAERARQGRLRLVGDGSNKVDTTYIDNAALAHFLAFEALAPGAACAGKAYFISNGEPLPMRELVNQLLAAVGAPRVDKAISFKTAYRIGAICERLWPLLRLRGEPPLTRFLAEQLCTPHWYSMEPARRDFGYVPQVSIEEGLRRLKASSAA</sequence>
<proteinExistence type="evidence at protein level"/>
<keyword id="KW-0521">NADP</keyword>
<keyword id="KW-0560">Oxidoreductase</keyword>
<keyword id="KW-1185">Reference proteome</keyword>